<dbReference type="EC" id="2.3.1.-"/>
<dbReference type="EMBL" id="AL123456">
    <property type="protein sequence ID" value="CCP43748.1"/>
    <property type="molecule type" value="Genomic_DNA"/>
</dbReference>
<dbReference type="PIR" id="A70602">
    <property type="entry name" value="A70602"/>
</dbReference>
<dbReference type="RefSeq" id="NP_215513.1">
    <property type="nucleotide sequence ID" value="NC_000962.3"/>
</dbReference>
<dbReference type="RefSeq" id="WP_003405164.1">
    <property type="nucleotide sequence ID" value="NZ_NVQJ01000018.1"/>
</dbReference>
<dbReference type="PDB" id="4AVA">
    <property type="method" value="X-ray"/>
    <property type="resolution" value="1.70 A"/>
    <property type="chains" value="A=1-333"/>
</dbReference>
<dbReference type="PDB" id="4AVB">
    <property type="method" value="X-ray"/>
    <property type="resolution" value="1.80 A"/>
    <property type="chains" value="A/B=1-333"/>
</dbReference>
<dbReference type="PDB" id="4AVC">
    <property type="method" value="X-ray"/>
    <property type="resolution" value="2.81 A"/>
    <property type="chains" value="A/B=1-333"/>
</dbReference>
<dbReference type="PDBsum" id="4AVA"/>
<dbReference type="PDBsum" id="4AVB"/>
<dbReference type="PDBsum" id="4AVC"/>
<dbReference type="SMR" id="O05581"/>
<dbReference type="STRING" id="83332.Rv0998"/>
<dbReference type="PaxDb" id="83332-Rv0998"/>
<dbReference type="DNASU" id="885385"/>
<dbReference type="GeneID" id="885385"/>
<dbReference type="KEGG" id="mtu:Rv0998"/>
<dbReference type="KEGG" id="mtv:RVBD_0998"/>
<dbReference type="PATRIC" id="fig|83332.111.peg.1109"/>
<dbReference type="TubercuList" id="Rv0998"/>
<dbReference type="eggNOG" id="COG0664">
    <property type="taxonomic scope" value="Bacteria"/>
</dbReference>
<dbReference type="eggNOG" id="COG1670">
    <property type="taxonomic scope" value="Bacteria"/>
</dbReference>
<dbReference type="InParanoid" id="O05581"/>
<dbReference type="OrthoDB" id="190266at2"/>
<dbReference type="PhylomeDB" id="O05581"/>
<dbReference type="BRENDA" id="2.3.1.48">
    <property type="organism ID" value="3445"/>
</dbReference>
<dbReference type="BRENDA" id="2.3.1.B34">
    <property type="organism ID" value="3445"/>
</dbReference>
<dbReference type="EvolutionaryTrace" id="O05581"/>
<dbReference type="Proteomes" id="UP000001584">
    <property type="component" value="Chromosome"/>
</dbReference>
<dbReference type="GO" id="GO:0005829">
    <property type="term" value="C:cytosol"/>
    <property type="evidence" value="ECO:0000318"/>
    <property type="project" value="GO_Central"/>
</dbReference>
<dbReference type="GO" id="GO:0016407">
    <property type="term" value="F:acetyltransferase activity"/>
    <property type="evidence" value="ECO:0000314"/>
    <property type="project" value="MTBBASE"/>
</dbReference>
<dbReference type="GO" id="GO:0016746">
    <property type="term" value="F:acyltransferase activity"/>
    <property type="evidence" value="ECO:0000314"/>
    <property type="project" value="CACAO"/>
</dbReference>
<dbReference type="GO" id="GO:0030552">
    <property type="term" value="F:cAMP binding"/>
    <property type="evidence" value="ECO:0000314"/>
    <property type="project" value="MTBBASE"/>
</dbReference>
<dbReference type="GO" id="GO:0003700">
    <property type="term" value="F:DNA-binding transcription factor activity"/>
    <property type="evidence" value="ECO:0000318"/>
    <property type="project" value="GO_Central"/>
</dbReference>
<dbReference type="GO" id="GO:0046872">
    <property type="term" value="F:metal ion binding"/>
    <property type="evidence" value="ECO:0007669"/>
    <property type="project" value="UniProtKB-KW"/>
</dbReference>
<dbReference type="CDD" id="cd00038">
    <property type="entry name" value="CAP_ED"/>
    <property type="match status" value="1"/>
</dbReference>
<dbReference type="CDD" id="cd04301">
    <property type="entry name" value="NAT_SF"/>
    <property type="match status" value="1"/>
</dbReference>
<dbReference type="FunFam" id="2.60.120.10:FF:000228">
    <property type="entry name" value="Acetyltransferase Pat"/>
    <property type="match status" value="1"/>
</dbReference>
<dbReference type="FunFam" id="3.40.630.30:FF:000194">
    <property type="entry name" value="Acetyltransferase Pat"/>
    <property type="match status" value="1"/>
</dbReference>
<dbReference type="Gene3D" id="3.40.630.30">
    <property type="match status" value="1"/>
</dbReference>
<dbReference type="Gene3D" id="2.60.120.10">
    <property type="entry name" value="Jelly Rolls"/>
    <property type="match status" value="1"/>
</dbReference>
<dbReference type="InterPro" id="IPR016181">
    <property type="entry name" value="Acyl_CoA_acyltransferase"/>
</dbReference>
<dbReference type="InterPro" id="IPR018488">
    <property type="entry name" value="cNMP-bd_CS"/>
</dbReference>
<dbReference type="InterPro" id="IPR000595">
    <property type="entry name" value="cNMP-bd_dom"/>
</dbReference>
<dbReference type="InterPro" id="IPR018490">
    <property type="entry name" value="cNMP-bd_dom_sf"/>
</dbReference>
<dbReference type="InterPro" id="IPR050397">
    <property type="entry name" value="Env_Response_Regulators"/>
</dbReference>
<dbReference type="InterPro" id="IPR000182">
    <property type="entry name" value="GNAT_dom"/>
</dbReference>
<dbReference type="InterPro" id="IPR014710">
    <property type="entry name" value="RmlC-like_jellyroll"/>
</dbReference>
<dbReference type="PANTHER" id="PTHR24567">
    <property type="entry name" value="CRP FAMILY TRANSCRIPTIONAL REGULATORY PROTEIN"/>
    <property type="match status" value="1"/>
</dbReference>
<dbReference type="PANTHER" id="PTHR24567:SF74">
    <property type="entry name" value="HTH-TYPE TRANSCRIPTIONAL REGULATOR ARCR"/>
    <property type="match status" value="1"/>
</dbReference>
<dbReference type="Pfam" id="PF13302">
    <property type="entry name" value="Acetyltransf_3"/>
    <property type="match status" value="1"/>
</dbReference>
<dbReference type="Pfam" id="PF00027">
    <property type="entry name" value="cNMP_binding"/>
    <property type="match status" value="1"/>
</dbReference>
<dbReference type="SMART" id="SM00100">
    <property type="entry name" value="cNMP"/>
    <property type="match status" value="1"/>
</dbReference>
<dbReference type="SUPFAM" id="SSF55729">
    <property type="entry name" value="Acyl-CoA N-acyltransferases (Nat)"/>
    <property type="match status" value="1"/>
</dbReference>
<dbReference type="SUPFAM" id="SSF51206">
    <property type="entry name" value="cAMP-binding domain-like"/>
    <property type="match status" value="1"/>
</dbReference>
<dbReference type="PROSITE" id="PS00889">
    <property type="entry name" value="CNMP_BINDING_2"/>
    <property type="match status" value="1"/>
</dbReference>
<dbReference type="PROSITE" id="PS50042">
    <property type="entry name" value="CNMP_BINDING_3"/>
    <property type="match status" value="1"/>
</dbReference>
<dbReference type="PROSITE" id="PS51186">
    <property type="entry name" value="GNAT"/>
    <property type="match status" value="1"/>
</dbReference>
<accession>O05581</accession>
<accession>F2GHE2</accession>
<accession>L0T851</accession>
<evidence type="ECO:0000255" key="1">
    <source>
        <dbReference type="PROSITE-ProRule" id="PRU00532"/>
    </source>
</evidence>
<evidence type="ECO:0000269" key="2">
    <source>
    </source>
</evidence>
<evidence type="ECO:0000269" key="3">
    <source>
    </source>
</evidence>
<evidence type="ECO:0000269" key="4">
    <source>
    </source>
</evidence>
<evidence type="ECO:0000305" key="5">
    <source>
    </source>
</evidence>
<evidence type="ECO:0007744" key="6">
    <source>
        <dbReference type="PDB" id="4AVB"/>
    </source>
</evidence>
<evidence type="ECO:0007744" key="7">
    <source>
        <dbReference type="PDB" id="4AVC"/>
    </source>
</evidence>
<evidence type="ECO:0007829" key="8">
    <source>
        <dbReference type="PDB" id="4AVA"/>
    </source>
</evidence>
<evidence type="ECO:0007829" key="9">
    <source>
        <dbReference type="PDB" id="4AVC"/>
    </source>
</evidence>
<protein>
    <recommendedName>
        <fullName>Acetyltransferase Pat</fullName>
        <ecNumber>2.3.1.-</ecNumber>
    </recommendedName>
    <alternativeName>
        <fullName>GCN5-like enzyme</fullName>
    </alternativeName>
    <alternativeName>
        <fullName>GCN5-related N-acetyltransferase</fullName>
        <shortName>GNAT</shortName>
    </alternativeName>
    <alternativeName>
        <fullName>Protein acetyltransferase</fullName>
        <shortName>Pat</shortName>
    </alternativeName>
</protein>
<gene>
    <name type="ordered locus">Rv0998</name>
</gene>
<organism>
    <name type="scientific">Mycobacterium tuberculosis (strain ATCC 25618 / H37Rv)</name>
    <dbReference type="NCBI Taxonomy" id="83332"/>
    <lineage>
        <taxon>Bacteria</taxon>
        <taxon>Bacillati</taxon>
        <taxon>Actinomycetota</taxon>
        <taxon>Actinomycetes</taxon>
        <taxon>Mycobacteriales</taxon>
        <taxon>Mycobacteriaceae</taxon>
        <taxon>Mycobacterium</taxon>
        <taxon>Mycobacterium tuberculosis complex</taxon>
    </lineage>
</organism>
<proteinExistence type="evidence at protein level"/>
<keyword id="KW-0002">3D-structure</keyword>
<keyword id="KW-0012">Acyltransferase</keyword>
<keyword id="KW-0460">Magnesium</keyword>
<keyword id="KW-0479">Metal-binding</keyword>
<keyword id="KW-1185">Reference proteome</keyword>
<keyword id="KW-0808">Transferase</keyword>
<comment type="function">
    <text evidence="2 3 4">Catalyzes specifically the acetylation of the epsilon-amino group of a highly conserved lysine residue in acetyl-CoA synthetase (ACS). This acetylation results in the inactivation of ACS activity and could be important for mycobacteria to adjust to environmental changes.</text>
</comment>
<comment type="cofactor">
    <cofactor evidence="4">
        <name>Mg(2+)</name>
        <dbReference type="ChEBI" id="CHEBI:18420"/>
    </cofactor>
</comment>
<comment type="activity regulation">
    <text evidence="3 4">Autoinhibited and allosterically activated by 3,5-cyclic adenosine monophosphate (cAMP). An extensive conformational rearrangement relieves this autoinhibition by means of a substrate-mimicking lid that covers the protein-substrate binding surface.</text>
</comment>
<comment type="subunit">
    <text evidence="4">Homodimer.</text>
</comment>
<sequence>MDGIAELTGARVEDLAGMDVFQGCPAEGLVSLAASVQPLRAAAGQVLLRQGEPAVSFLLISSGSAEVSHVGDDGVAIIARALPGMIVGEIALLRDSPRSATVTTIEPLTGWTGGRGAFATMVHIPGVGERLLRTARQRLAAFVSPIPVRLADGTQLMLRPVLPGDRERTVHGHIQFSGETLYRRFMSARVPSPALMHYLSEVDYVDHFVWVVTDGSDPVADARFVRDETDPTVAEIAFTVADAYQGRGIGSFLIGALSVAARVDGVERFAARMLSDNVPMRTIMDRYGAVWQREDVGVITTMIDVPGPGELSLGREMVDQINRVARQVIEAVG</sequence>
<reference key="1">
    <citation type="journal article" date="1998" name="Nature">
        <title>Deciphering the biology of Mycobacterium tuberculosis from the complete genome sequence.</title>
        <authorList>
            <person name="Cole S.T."/>
            <person name="Brosch R."/>
            <person name="Parkhill J."/>
            <person name="Garnier T."/>
            <person name="Churcher C.M."/>
            <person name="Harris D.E."/>
            <person name="Gordon S.V."/>
            <person name="Eiglmeier K."/>
            <person name="Gas S."/>
            <person name="Barry C.E. III"/>
            <person name="Tekaia F."/>
            <person name="Badcock K."/>
            <person name="Basham D."/>
            <person name="Brown D."/>
            <person name="Chillingworth T."/>
            <person name="Connor R."/>
            <person name="Davies R.M."/>
            <person name="Devlin K."/>
            <person name="Feltwell T."/>
            <person name="Gentles S."/>
            <person name="Hamlin N."/>
            <person name="Holroyd S."/>
            <person name="Hornsby T."/>
            <person name="Jagels K."/>
            <person name="Krogh A."/>
            <person name="McLean J."/>
            <person name="Moule S."/>
            <person name="Murphy L.D."/>
            <person name="Oliver S."/>
            <person name="Osborne J."/>
            <person name="Quail M.A."/>
            <person name="Rajandream M.A."/>
            <person name="Rogers J."/>
            <person name="Rutter S."/>
            <person name="Seeger K."/>
            <person name="Skelton S."/>
            <person name="Squares S."/>
            <person name="Squares R."/>
            <person name="Sulston J.E."/>
            <person name="Taylor K."/>
            <person name="Whitehead S."/>
            <person name="Barrell B.G."/>
        </authorList>
    </citation>
    <scope>NUCLEOTIDE SEQUENCE [LARGE SCALE GENOMIC DNA]</scope>
    <source>
        <strain>ATCC 25618 / H37Rv</strain>
    </source>
</reference>
<reference key="2">
    <citation type="journal article" date="2010" name="J. Biol. Chem.">
        <title>cAMP-regulated protein lysine acetylases in mycobacteria.</title>
        <authorList>
            <person name="Nambi S."/>
            <person name="Basu N."/>
            <person name="Visweswariah S.S."/>
        </authorList>
    </citation>
    <scope>FUNCTION</scope>
</reference>
<reference key="3">
    <citation type="journal article" date="2011" name="Biochemistry">
        <title>Reversible acetylation and inactivation of Mycobacterium tuberculosis acetyl-CoA synthetase is dependent on cAMP.</title>
        <authorList>
            <person name="Xu H."/>
            <person name="Hegde S.S."/>
            <person name="Blanchard J.S."/>
        </authorList>
    </citation>
    <scope>FUNCTION</scope>
    <scope>ACTIVITY REGULATION</scope>
</reference>
<reference key="4">
    <citation type="journal article" date="2011" name="Mol. Cell. Proteomics">
        <title>Proteogenomic analysis of Mycobacterium tuberculosis by high resolution mass spectrometry.</title>
        <authorList>
            <person name="Kelkar D.S."/>
            <person name="Kumar D."/>
            <person name="Kumar P."/>
            <person name="Balakrishnan L."/>
            <person name="Muthusamy B."/>
            <person name="Yadav A.K."/>
            <person name="Shrivastava P."/>
            <person name="Marimuthu A."/>
            <person name="Anand S."/>
            <person name="Sundaram H."/>
            <person name="Kingsbury R."/>
            <person name="Harsha H.C."/>
            <person name="Nair B."/>
            <person name="Prasad T.S."/>
            <person name="Chauhan D.S."/>
            <person name="Katoch K."/>
            <person name="Katoch V.M."/>
            <person name="Kumar P."/>
            <person name="Chaerkady R."/>
            <person name="Ramachandran S."/>
            <person name="Dash D."/>
            <person name="Pandey A."/>
        </authorList>
    </citation>
    <scope>IDENTIFICATION BY MASS SPECTROMETRY [LARGE SCALE ANALYSIS]</scope>
    <source>
        <strain>ATCC 25618 / H37Rv</strain>
    </source>
</reference>
<reference key="5">
    <citation type="journal article" date="2012" name="Nat. Struct. Mol. Biol.">
        <title>Cyclic AMP regulation of protein lysine acetylation in Mycobacterium tuberculosis.</title>
        <authorList>
            <person name="Lee H.J."/>
            <person name="Lang P.T."/>
            <person name="Fortune S.M."/>
            <person name="Sassetti C.M."/>
            <person name="Alber T."/>
        </authorList>
    </citation>
    <scope>X-RAY CRYSTALLOGRAPHY (1.7 ANGSTROMS) IN COMPLEX WITH SUBSTRATE ANALOGS</scope>
    <scope>CAMP AND MAGNESIUM IONS</scope>
    <scope>FUNCTION</scope>
    <scope>MUTAGENESIS OF HIS-173; ARG-184; PHE-185; ARG-223; VAL-225 AND ALA-237</scope>
    <scope>ACTIVITY REGULATION</scope>
    <scope>COFACTOR</scope>
    <scope>SUBUNIT</scope>
</reference>
<name>PAT_MYCTU</name>
<feature type="chain" id="PRO_0000420362" description="Acetyltransferase Pat">
    <location>
        <begin position="1"/>
        <end position="333"/>
    </location>
</feature>
<feature type="domain" description="N-acetyltransferase" evidence="1">
    <location>
        <begin position="156"/>
        <end position="318"/>
    </location>
</feature>
<feature type="binding site" evidence="4 6 7">
    <location>
        <begin position="88"/>
        <end position="91"/>
    </location>
    <ligand>
        <name>3',5'-cyclic AMP</name>
        <dbReference type="ChEBI" id="CHEBI:58165"/>
        <note>allosteric activator</note>
    </ligand>
</feature>
<feature type="binding site" evidence="4 6 7">
    <location>
        <begin position="98"/>
        <end position="99"/>
    </location>
    <ligand>
        <name>3',5'-cyclic AMP</name>
        <dbReference type="ChEBI" id="CHEBI:58165"/>
        <note>allosteric activator</note>
    </ligand>
</feature>
<feature type="binding site" evidence="4 6 7">
    <location>
        <position position="138"/>
    </location>
    <ligand>
        <name>3',5'-cyclic AMP</name>
        <dbReference type="ChEBI" id="CHEBI:58165"/>
        <note>allosteric activator</note>
    </ligand>
</feature>
<feature type="binding site" evidence="5">
    <location>
        <position position="173"/>
    </location>
    <ligand>
        <name>substrate</name>
    </ligand>
</feature>
<feature type="binding site" evidence="4">
    <location>
        <position position="214"/>
    </location>
    <ligand>
        <name>Mg(2+)</name>
        <dbReference type="ChEBI" id="CHEBI:18420"/>
    </ligand>
</feature>
<feature type="binding site" evidence="5">
    <location>
        <begin position="238"/>
        <end position="240"/>
    </location>
    <ligand>
        <name>substrate</name>
    </ligand>
</feature>
<feature type="binding site" evidence="5">
    <location>
        <begin position="246"/>
        <end position="251"/>
    </location>
    <ligand>
        <name>substrate</name>
    </ligand>
</feature>
<feature type="binding site" evidence="5">
    <location>
        <position position="277"/>
    </location>
    <ligand>
        <name>substrate</name>
    </ligand>
</feature>
<feature type="binding site" evidence="5">
    <location>
        <position position="286"/>
    </location>
    <ligand>
        <name>substrate</name>
    </ligand>
</feature>
<feature type="mutagenesis site" description="Induces autoacetylation of the new lysine in the absence of cAMP." evidence="4">
    <original>H</original>
    <variation>K</variation>
    <location>
        <position position="173"/>
    </location>
</feature>
<feature type="mutagenesis site" description="Completely abolishes the interaction with the aliphatic tail of the substrate lysine." evidence="4">
    <original>R</original>
    <variation>A</variation>
    <location>
        <position position="184"/>
    </location>
</feature>
<feature type="mutagenesis site" description="Completely abolishes the interaction with the aliphatic tail of the substrate lysine." evidence="4">
    <original>F</original>
    <variation>A</variation>
    <location>
        <position position="185"/>
    </location>
</feature>
<feature type="mutagenesis site" description="Substantially decreases the interaction with the aliphatic tail of the substrate lysine. Markedly reduced activity, with an altered pH-rate profile and abolishes direct interactions with R-184." evidence="4">
    <original>R</original>
    <variation>A</variation>
    <location>
        <position position="223"/>
    </location>
</feature>
<feature type="mutagenesis site" description="Substantially decreases the interaction with the aliphatic tail of the substrate lysine." evidence="4">
    <original>V</original>
    <variation>A</variation>
    <location>
        <position position="225"/>
    </location>
</feature>
<feature type="mutagenesis site" description="Completely abolishes the interaction with the aliphatic tail of the substrate lysine." evidence="4">
    <original>A</original>
    <variation>V</variation>
    <location>
        <position position="237"/>
    </location>
</feature>
<feature type="helix" evidence="8">
    <location>
        <begin position="12"/>
        <end position="15"/>
    </location>
</feature>
<feature type="helix" evidence="8">
    <location>
        <begin position="19"/>
        <end position="21"/>
    </location>
</feature>
<feature type="helix" evidence="8">
    <location>
        <begin position="26"/>
        <end position="35"/>
    </location>
</feature>
<feature type="strand" evidence="8">
    <location>
        <begin position="37"/>
        <end position="41"/>
    </location>
</feature>
<feature type="strand" evidence="8">
    <location>
        <begin position="46"/>
        <end position="48"/>
    </location>
</feature>
<feature type="strand" evidence="8">
    <location>
        <begin position="57"/>
        <end position="62"/>
    </location>
</feature>
<feature type="strand" evidence="8">
    <location>
        <begin position="65"/>
        <end position="70"/>
    </location>
</feature>
<feature type="strand" evidence="8">
    <location>
        <begin position="76"/>
        <end position="81"/>
    </location>
</feature>
<feature type="strand" evidence="8">
    <location>
        <begin position="86"/>
        <end position="88"/>
    </location>
</feature>
<feature type="helix" evidence="8">
    <location>
        <begin position="89"/>
        <end position="94"/>
    </location>
</feature>
<feature type="strand" evidence="8">
    <location>
        <begin position="99"/>
        <end position="106"/>
    </location>
</feature>
<feature type="strand" evidence="8">
    <location>
        <begin position="108"/>
        <end position="113"/>
    </location>
</feature>
<feature type="helix" evidence="8">
    <location>
        <begin position="115"/>
        <end position="123"/>
    </location>
</feature>
<feature type="helix" evidence="8">
    <location>
        <begin position="127"/>
        <end position="142"/>
    </location>
</feature>
<feature type="strand" evidence="8">
    <location>
        <begin position="146"/>
        <end position="149"/>
    </location>
</feature>
<feature type="strand" evidence="8">
    <location>
        <begin position="155"/>
        <end position="160"/>
    </location>
</feature>
<feature type="helix" evidence="8">
    <location>
        <begin position="166"/>
        <end position="168"/>
    </location>
</feature>
<feature type="strand" evidence="9">
    <location>
        <begin position="171"/>
        <end position="173"/>
    </location>
</feature>
<feature type="helix" evidence="8">
    <location>
        <begin position="178"/>
        <end position="182"/>
    </location>
</feature>
<feature type="helix" evidence="8">
    <location>
        <begin position="183"/>
        <end position="185"/>
    </location>
</feature>
<feature type="helix" evidence="8">
    <location>
        <begin position="193"/>
        <end position="202"/>
    </location>
</feature>
<feature type="strand" evidence="8">
    <location>
        <begin position="205"/>
        <end position="214"/>
    </location>
</feature>
<feature type="strand" evidence="8">
    <location>
        <begin position="217"/>
        <end position="226"/>
    </location>
</feature>
<feature type="strand" evidence="8">
    <location>
        <begin position="233"/>
        <end position="240"/>
    </location>
</feature>
<feature type="helix" evidence="8">
    <location>
        <begin position="242"/>
        <end position="244"/>
    </location>
</feature>
<feature type="helix" evidence="8">
    <location>
        <begin position="249"/>
        <end position="263"/>
    </location>
</feature>
<feature type="strand" evidence="8">
    <location>
        <begin position="268"/>
        <end position="274"/>
    </location>
</feature>
<feature type="helix" evidence="8">
    <location>
        <begin position="278"/>
        <end position="285"/>
    </location>
</feature>
<feature type="turn" evidence="8">
    <location>
        <begin position="286"/>
        <end position="288"/>
    </location>
</feature>
<feature type="strand" evidence="9">
    <location>
        <begin position="292"/>
        <end position="295"/>
    </location>
</feature>
<feature type="strand" evidence="8">
    <location>
        <begin position="298"/>
        <end position="304"/>
    </location>
</feature>
<feature type="turn" evidence="8">
    <location>
        <begin position="308"/>
        <end position="310"/>
    </location>
</feature>
<feature type="strand" evidence="8">
    <location>
        <begin position="311"/>
        <end position="313"/>
    </location>
</feature>
<feature type="helix" evidence="8">
    <location>
        <begin position="315"/>
        <end position="330"/>
    </location>
</feature>